<reference key="1">
    <citation type="journal article" date="2003" name="Mol. Microbiol.">
        <title>Genome-based analysis of virulence genes in a non-biofilm-forming Staphylococcus epidermidis strain (ATCC 12228).</title>
        <authorList>
            <person name="Zhang Y.-Q."/>
            <person name="Ren S.-X."/>
            <person name="Li H.-L."/>
            <person name="Wang Y.-X."/>
            <person name="Fu G."/>
            <person name="Yang J."/>
            <person name="Qin Z.-Q."/>
            <person name="Miao Y.-G."/>
            <person name="Wang W.-Y."/>
            <person name="Chen R.-S."/>
            <person name="Shen Y."/>
            <person name="Chen Z."/>
            <person name="Yuan Z.-H."/>
            <person name="Zhao G.-P."/>
            <person name="Qu D."/>
            <person name="Danchin A."/>
            <person name="Wen Y.-M."/>
        </authorList>
    </citation>
    <scope>NUCLEOTIDE SEQUENCE [LARGE SCALE GENOMIC DNA]</scope>
    <source>
        <strain>ATCC 12228 / FDA PCI 1200</strain>
    </source>
</reference>
<comment type="function">
    <text evidence="2">With S4 and S5 plays an important role in translational accuracy.</text>
</comment>
<comment type="function">
    <text evidence="2">Interacts with and stabilizes bases of the 16S rRNA that are involved in tRNA selection in the A site and with the mRNA backbone. Located at the interface of the 30S and 50S subunits, it traverses the body of the 30S subunit contacting proteins on the other side and probably holding the rRNA structure together. The combined cluster of proteins S8, S12 and S17 appears to hold together the shoulder and platform of the 30S subunit.</text>
</comment>
<comment type="subunit">
    <text evidence="2">Part of the 30S ribosomal subunit. Contacts proteins S8 and S17. May interact with IF1 in the 30S initiation complex.</text>
</comment>
<comment type="similarity">
    <text evidence="2">Belongs to the universal ribosomal protein uS12 family.</text>
</comment>
<feature type="chain" id="PRO_0000146315" description="Small ribosomal subunit protein uS12">
    <location>
        <begin position="1"/>
        <end position="137"/>
    </location>
</feature>
<feature type="region of interest" description="Disordered" evidence="3">
    <location>
        <begin position="1"/>
        <end position="57"/>
    </location>
</feature>
<feature type="region of interest" description="Disordered" evidence="3">
    <location>
        <begin position="118"/>
        <end position="137"/>
    </location>
</feature>
<feature type="modified residue" description="3-methylthioaspartic acid" evidence="1">
    <location>
        <position position="102"/>
    </location>
</feature>
<evidence type="ECO:0000250" key="1"/>
<evidence type="ECO:0000255" key="2">
    <source>
        <dbReference type="HAMAP-Rule" id="MF_00403"/>
    </source>
</evidence>
<evidence type="ECO:0000256" key="3">
    <source>
        <dbReference type="SAM" id="MobiDB-lite"/>
    </source>
</evidence>
<evidence type="ECO:0000305" key="4"/>
<proteinExistence type="inferred from homology"/>
<dbReference type="EMBL" id="AE015929">
    <property type="protein sequence ID" value="AAO03906.1"/>
    <property type="molecule type" value="Genomic_DNA"/>
</dbReference>
<dbReference type="RefSeq" id="NP_763864.1">
    <property type="nucleotide sequence ID" value="NC_004461.1"/>
</dbReference>
<dbReference type="RefSeq" id="WP_002485042.1">
    <property type="nucleotide sequence ID" value="NC_004461.1"/>
</dbReference>
<dbReference type="SMR" id="Q8CTS8"/>
<dbReference type="KEGG" id="sep:SE_0309"/>
<dbReference type="PATRIC" id="fig|176280.10.peg.284"/>
<dbReference type="eggNOG" id="COG0048">
    <property type="taxonomic scope" value="Bacteria"/>
</dbReference>
<dbReference type="HOGENOM" id="CLU_104295_1_1_9"/>
<dbReference type="OrthoDB" id="9802366at2"/>
<dbReference type="Proteomes" id="UP000001411">
    <property type="component" value="Chromosome"/>
</dbReference>
<dbReference type="GO" id="GO:0015935">
    <property type="term" value="C:small ribosomal subunit"/>
    <property type="evidence" value="ECO:0007669"/>
    <property type="project" value="InterPro"/>
</dbReference>
<dbReference type="GO" id="GO:0019843">
    <property type="term" value="F:rRNA binding"/>
    <property type="evidence" value="ECO:0007669"/>
    <property type="project" value="UniProtKB-UniRule"/>
</dbReference>
<dbReference type="GO" id="GO:0003735">
    <property type="term" value="F:structural constituent of ribosome"/>
    <property type="evidence" value="ECO:0007669"/>
    <property type="project" value="InterPro"/>
</dbReference>
<dbReference type="GO" id="GO:0000049">
    <property type="term" value="F:tRNA binding"/>
    <property type="evidence" value="ECO:0007669"/>
    <property type="project" value="UniProtKB-UniRule"/>
</dbReference>
<dbReference type="GO" id="GO:0006412">
    <property type="term" value="P:translation"/>
    <property type="evidence" value="ECO:0007669"/>
    <property type="project" value="UniProtKB-UniRule"/>
</dbReference>
<dbReference type="CDD" id="cd03368">
    <property type="entry name" value="Ribosomal_S12"/>
    <property type="match status" value="1"/>
</dbReference>
<dbReference type="FunFam" id="2.40.50.140:FF:000001">
    <property type="entry name" value="30S ribosomal protein S12"/>
    <property type="match status" value="1"/>
</dbReference>
<dbReference type="Gene3D" id="2.40.50.140">
    <property type="entry name" value="Nucleic acid-binding proteins"/>
    <property type="match status" value="1"/>
</dbReference>
<dbReference type="HAMAP" id="MF_00403_B">
    <property type="entry name" value="Ribosomal_uS12_B"/>
    <property type="match status" value="1"/>
</dbReference>
<dbReference type="InterPro" id="IPR012340">
    <property type="entry name" value="NA-bd_OB-fold"/>
</dbReference>
<dbReference type="InterPro" id="IPR006032">
    <property type="entry name" value="Ribosomal_uS12"/>
</dbReference>
<dbReference type="InterPro" id="IPR005679">
    <property type="entry name" value="Ribosomal_uS12_bac"/>
</dbReference>
<dbReference type="NCBIfam" id="TIGR00981">
    <property type="entry name" value="rpsL_bact"/>
    <property type="match status" value="1"/>
</dbReference>
<dbReference type="PANTHER" id="PTHR11652">
    <property type="entry name" value="30S RIBOSOMAL PROTEIN S12 FAMILY MEMBER"/>
    <property type="match status" value="1"/>
</dbReference>
<dbReference type="Pfam" id="PF00164">
    <property type="entry name" value="Ribosom_S12_S23"/>
    <property type="match status" value="1"/>
</dbReference>
<dbReference type="PIRSF" id="PIRSF002133">
    <property type="entry name" value="Ribosomal_S12/S23"/>
    <property type="match status" value="1"/>
</dbReference>
<dbReference type="PRINTS" id="PR01034">
    <property type="entry name" value="RIBOSOMALS12"/>
</dbReference>
<dbReference type="SUPFAM" id="SSF50249">
    <property type="entry name" value="Nucleic acid-binding proteins"/>
    <property type="match status" value="1"/>
</dbReference>
<dbReference type="PROSITE" id="PS00055">
    <property type="entry name" value="RIBOSOMAL_S12"/>
    <property type="match status" value="1"/>
</dbReference>
<organism>
    <name type="scientific">Staphylococcus epidermidis (strain ATCC 12228 / FDA PCI 1200)</name>
    <dbReference type="NCBI Taxonomy" id="176280"/>
    <lineage>
        <taxon>Bacteria</taxon>
        <taxon>Bacillati</taxon>
        <taxon>Bacillota</taxon>
        <taxon>Bacilli</taxon>
        <taxon>Bacillales</taxon>
        <taxon>Staphylococcaceae</taxon>
        <taxon>Staphylococcus</taxon>
    </lineage>
</organism>
<protein>
    <recommendedName>
        <fullName evidence="2">Small ribosomal subunit protein uS12</fullName>
    </recommendedName>
    <alternativeName>
        <fullName evidence="4">30S ribosomal protein S12</fullName>
    </alternativeName>
</protein>
<gene>
    <name evidence="2" type="primary">rpsL</name>
    <name type="ordered locus">SE_0309</name>
</gene>
<keyword id="KW-0488">Methylation</keyword>
<keyword id="KW-0687">Ribonucleoprotein</keyword>
<keyword id="KW-0689">Ribosomal protein</keyword>
<keyword id="KW-0694">RNA-binding</keyword>
<keyword id="KW-0699">rRNA-binding</keyword>
<keyword id="KW-0820">tRNA-binding</keyword>
<name>RS12_STAES</name>
<sequence length="137" mass="15344">MPTINQLVRKPRKSKTKQSDSPVLNRGFNSKKKQFTNLNSPQKRGVCTRVGTMTPRKPNSALRKYARVRLSNNIEVNAYIPGIGHNLQEHSVVLVRGGRVKDLPGVRYHIVRGALDTSGVDGRRQGRSLYGTKKPKN</sequence>
<accession>Q8CTS8</accession>